<organism>
    <name type="scientific">Aspergillus terreus (strain NIH 2624 / FGSC A1156)</name>
    <dbReference type="NCBI Taxonomy" id="341663"/>
    <lineage>
        <taxon>Eukaryota</taxon>
        <taxon>Fungi</taxon>
        <taxon>Dikarya</taxon>
        <taxon>Ascomycota</taxon>
        <taxon>Pezizomycotina</taxon>
        <taxon>Eurotiomycetes</taxon>
        <taxon>Eurotiomycetidae</taxon>
        <taxon>Eurotiales</taxon>
        <taxon>Aspergillaceae</taxon>
        <taxon>Aspergillus</taxon>
        <taxon>Aspergillus subgen. Circumdati</taxon>
    </lineage>
</organism>
<proteinExistence type="evidence at protein level"/>
<comment type="function">
    <text evidence="9 10 11 12 13">Non-reducing polyketide synthase; part of the gene cluster that mediates the biosynthesis of terretonin, a fungal meroterpenoid that acts as a mycotoxin (PubMed:22549923, PubMed:23116177, PubMed:25671343). The first step of the pathway is the synthesis of 3,5-dimethylorsellinic acid (DMOA) by the polyketide synthase trt4 (PubMed:22549923, PubMed:23116177). DMOA is then prenylated into farnesyl-DMOA by the polyprenyl transferase trt2 (PubMed:22549923, PubMed:22782788, PubMed:23116177). Methylation by the methyltransferase trt5 then leads to farnesyl-DMOA methyl ester which is further subject to epoxidation by the FAD-dependent monooxygenase trt8 to yield epoxyfarnesyl-DMOA methyl ester (PubMed:22549923, PubMed:22782788, PubMed:23116177). Cyclization of epoxyfarnesyl-DMOA methyl ester by the terpene cyclase trt1 leads to a tetracycle intermediate which is in turn converted to preterretonin (PubMed:22549923, PubMed:22782788, PubMed:23116177). Dehydrogenase trt9 comes next to transform preterretonin to preterrenoid (PubMed:22549923, PubMed:23116177). The FAD-dependent monooxygenase trt3 is then required for the C-hydroxylation at C16 of preterrenoid to yield terrenoid (PubMed:22549923, PubMed:23116177). The cytochrome P450 trt6 catalyzes three successive oxidations to transform terrenoid into an unstable intermediate, which then undergoes the D-ring expansion and unusual rearrangement of the methoxy group to afford the core skeleton of terretonin (PubMed:25671343, PubMed:28759016). Trt14 catalyzes the D-ring expansion of terretonin involving intramolecular methoxy rearrangement as well as the hydrolysis of the expanded D-ring and the methyl ester moiety (PubMed:25671343, PubMed:28759016). Finally, the nonheme iron-dependent dioxygenase trt7 accomplishes the last two oxidation reactions steps to complete the biosynthesis of terretonin (PubMed:25671343). Terretonin C is produced via spontaneous decarboxylation of the terretonin precursor (PubMed:23116177). Another shunt product of the terretonin biosynthesis is dihydrofarnesyl-DMOA, derived from epoxyfarnesyl-DMOA through hydrolysis of the epoxide (PubMed:22549923, PubMed:22782788, PubMed:23116177).</text>
</comment>
<comment type="catalytic activity">
    <reaction evidence="9 10">
        <text>3 malonyl-CoA + acetyl-CoA + 2 S-adenosyl-L-methionine = 3,5-dimethylorsellinate + 2 S-adenosyl-L-homocysteine + 3 CO2 + 4 CoA</text>
        <dbReference type="Rhea" id="RHEA:49628"/>
        <dbReference type="ChEBI" id="CHEBI:16526"/>
        <dbReference type="ChEBI" id="CHEBI:57287"/>
        <dbReference type="ChEBI" id="CHEBI:57288"/>
        <dbReference type="ChEBI" id="CHEBI:57384"/>
        <dbReference type="ChEBI" id="CHEBI:57856"/>
        <dbReference type="ChEBI" id="CHEBI:59789"/>
        <dbReference type="ChEBI" id="CHEBI:131856"/>
    </reaction>
    <physiologicalReaction direction="left-to-right" evidence="9 10">
        <dbReference type="Rhea" id="RHEA:49629"/>
    </physiologicalReaction>
</comment>
<comment type="pathway">
    <text evidence="11">Secondary metabolite biosynthesis; terpenoid biosynthesis.</text>
</comment>
<comment type="domain">
    <text evidence="2 16">Multidomain protein; including a starter unit:ACP transacylase (SAT) that selects the starter unit; a ketosynthase (KS) that catalyzes repeated decarboxylative condensation to elongate the polyketide backbone; a malonyl-CoA:ACP transacylase (MAT) that selects and transfers the extender unit malonyl-CoA; a product template (PT) domain that controls the immediate cyclization regioselectivity of the reactive polyketide backbone; and an acyl-carrier protein (ACP) that serves as the tether of the growing and completed polyketide via its phosphopantetheinyl arm (PubMed:23116177).</text>
</comment>
<comment type="domain">
    <text evidence="1">The release of the polyketide chain from the non-reducing polyketide synthase is mediated by the thioesterase (TE) domain localized at the C-ter of the protein (By similarity).</text>
</comment>
<comment type="disruption phenotype">
    <text evidence="11">Impairs the synthesis of terretonin (PubMed:23116177).</text>
</comment>
<comment type="sequence caution" evidence="15">
    <conflict type="erroneous gene model prediction">
        <sequence resource="EMBL-CDS" id="EAU29529"/>
    </conflict>
</comment>
<feature type="chain" id="PRO_0000436593" description="Non-reducing polyketide synthase trt4">
    <location>
        <begin position="1"/>
        <end position="2422"/>
    </location>
</feature>
<feature type="domain" description="Ketosynthase family 3 (KS3)" evidence="5">
    <location>
        <begin position="329"/>
        <end position="745"/>
    </location>
</feature>
<feature type="domain" description="PKS/mFAS DH" evidence="6">
    <location>
        <begin position="1190"/>
        <end position="1495"/>
    </location>
</feature>
<feature type="domain" description="Carrier" evidence="4">
    <location>
        <begin position="1535"/>
        <end position="1612"/>
    </location>
</feature>
<feature type="region of interest" description="N-terminal acylcarrier protein transacylase domain (SAT)" evidence="3">
    <location>
        <begin position="14"/>
        <end position="196"/>
    </location>
</feature>
<feature type="region of interest" description="Disordered" evidence="8">
    <location>
        <begin position="289"/>
        <end position="314"/>
    </location>
</feature>
<feature type="region of interest" description="Malonyl-CoA:ACP transacylase (MAT) domain" evidence="3">
    <location>
        <begin position="856"/>
        <end position="1121"/>
    </location>
</feature>
<feature type="region of interest" description="N-terminal hotdog fold" evidence="6">
    <location>
        <begin position="1190"/>
        <end position="1316"/>
    </location>
</feature>
<feature type="region of interest" description="Product template (PT) domain" evidence="3">
    <location>
        <begin position="1191"/>
        <end position="1494"/>
    </location>
</feature>
<feature type="region of interest" description="C-terminal hotdog fold" evidence="6">
    <location>
        <begin position="1345"/>
        <end position="1495"/>
    </location>
</feature>
<feature type="region of interest" description="Disordered" evidence="8">
    <location>
        <begin position="1615"/>
        <end position="1636"/>
    </location>
</feature>
<feature type="region of interest" description="Methyltransferase (CMeT) domain" evidence="3">
    <location>
        <begin position="1774"/>
        <end position="2007"/>
    </location>
</feature>
<feature type="region of interest" description="Thioesterase (TE) domain" evidence="1">
    <location>
        <begin position="2036"/>
        <end position="2383"/>
    </location>
</feature>
<feature type="compositionally biased region" description="Polar residues" evidence="8">
    <location>
        <begin position="297"/>
        <end position="312"/>
    </location>
</feature>
<feature type="active site" description="For beta-ketoacyl synthase activity" evidence="5">
    <location>
        <position position="494"/>
    </location>
</feature>
<feature type="active site" description="For beta-ketoacyl synthase activity" evidence="5">
    <location>
        <position position="629"/>
    </location>
</feature>
<feature type="active site" description="For beta-ketoacyl synthase activity" evidence="5">
    <location>
        <position position="668"/>
    </location>
</feature>
<feature type="active site" description="For acyl/malonyl transferase activity" evidence="7">
    <location>
        <position position="904"/>
    </location>
</feature>
<feature type="active site" description="Proton acceptor; for dehydratase activity" evidence="6">
    <location>
        <position position="1221"/>
    </location>
</feature>
<feature type="active site" description="Proton donor; for dehydratase activity" evidence="6">
    <location>
        <position position="1402"/>
    </location>
</feature>
<feature type="active site" description="For thioesterase activity" evidence="1">
    <location>
        <position position="2159"/>
    </location>
</feature>
<feature type="active site" description="For thioesterase activity" evidence="1">
    <location>
        <position position="2320"/>
    </location>
</feature>
<feature type="active site" description="For thioesterase activity" evidence="1">
    <location>
        <position position="2352"/>
    </location>
</feature>
<feature type="modified residue" description="O-(pantetheine 4'-phosphoryl)serine" evidence="4">
    <location>
        <position position="1572"/>
    </location>
</feature>
<evidence type="ECO:0000250" key="1">
    <source>
        <dbReference type="UniProtKB" id="Q5ATJ7"/>
    </source>
</evidence>
<evidence type="ECO:0000250" key="2">
    <source>
        <dbReference type="UniProtKB" id="Q5B0D0"/>
    </source>
</evidence>
<evidence type="ECO:0000255" key="3"/>
<evidence type="ECO:0000255" key="4">
    <source>
        <dbReference type="PROSITE-ProRule" id="PRU00258"/>
    </source>
</evidence>
<evidence type="ECO:0000255" key="5">
    <source>
        <dbReference type="PROSITE-ProRule" id="PRU01348"/>
    </source>
</evidence>
<evidence type="ECO:0000255" key="6">
    <source>
        <dbReference type="PROSITE-ProRule" id="PRU01363"/>
    </source>
</evidence>
<evidence type="ECO:0000255" key="7">
    <source>
        <dbReference type="PROSITE-ProRule" id="PRU10022"/>
    </source>
</evidence>
<evidence type="ECO:0000256" key="8">
    <source>
        <dbReference type="SAM" id="MobiDB-lite"/>
    </source>
</evidence>
<evidence type="ECO:0000269" key="9">
    <source>
    </source>
</evidence>
<evidence type="ECO:0000269" key="10">
    <source>
    </source>
</evidence>
<evidence type="ECO:0000269" key="11">
    <source>
    </source>
</evidence>
<evidence type="ECO:0000269" key="12">
    <source>
    </source>
</evidence>
<evidence type="ECO:0000269" key="13">
    <source>
    </source>
</evidence>
<evidence type="ECO:0000303" key="14">
    <source>
    </source>
</evidence>
<evidence type="ECO:0000305" key="15"/>
<evidence type="ECO:0000305" key="16">
    <source>
    </source>
</evidence>
<reference key="1">
    <citation type="submission" date="2005-09" db="EMBL/GenBank/DDBJ databases">
        <title>Annotation of the Aspergillus terreus NIH2624 genome.</title>
        <authorList>
            <person name="Birren B.W."/>
            <person name="Lander E.S."/>
            <person name="Galagan J.E."/>
            <person name="Nusbaum C."/>
            <person name="Devon K."/>
            <person name="Henn M."/>
            <person name="Ma L.-J."/>
            <person name="Jaffe D.B."/>
            <person name="Butler J."/>
            <person name="Alvarez P."/>
            <person name="Gnerre S."/>
            <person name="Grabherr M."/>
            <person name="Kleber M."/>
            <person name="Mauceli E.W."/>
            <person name="Brockman W."/>
            <person name="Rounsley S."/>
            <person name="Young S.K."/>
            <person name="LaButti K."/>
            <person name="Pushparaj V."/>
            <person name="DeCaprio D."/>
            <person name="Crawford M."/>
            <person name="Koehrsen M."/>
            <person name="Engels R."/>
            <person name="Montgomery P."/>
            <person name="Pearson M."/>
            <person name="Howarth C."/>
            <person name="Larson L."/>
            <person name="Luoma S."/>
            <person name="White J."/>
            <person name="Alvarado L."/>
            <person name="Kodira C.D."/>
            <person name="Zeng Q."/>
            <person name="Oleary S."/>
            <person name="Yandava C."/>
            <person name="Denning D.W."/>
            <person name="Nierman W.C."/>
            <person name="Milne T."/>
            <person name="Madden K."/>
        </authorList>
    </citation>
    <scope>NUCLEOTIDE SEQUENCE [LARGE SCALE GENOMIC DNA]</scope>
    <source>
        <strain>NIH 2624 / FGSC A1156</strain>
    </source>
</reference>
<reference key="2">
    <citation type="journal article" date="2012" name="ChemBioChem">
        <title>Identification of a key prenyltransferase involved in biosynthesis of the most abundant fungal meroterpenoids derived from 3,5-dimethylorsellinic acid.</title>
        <authorList>
            <person name="Itoh T."/>
            <person name="Tokunaga K."/>
            <person name="Radhakrishnan E.K."/>
            <person name="Fujii I."/>
            <person name="Abe I."/>
            <person name="Ebizuka Y."/>
            <person name="Kushiro T."/>
        </authorList>
    </citation>
    <scope>FUNCTION</scope>
    <scope>CATALYTIC ACTIVITY</scope>
</reference>
<reference key="3">
    <citation type="journal article" date="2012" name="ChemBioChem">
        <title>Terretonin biosynthesis requires methylation as essential step for cyclization.</title>
        <authorList>
            <person name="Matsuda Y."/>
            <person name="Awakawa T."/>
            <person name="Itoh T."/>
            <person name="Wakimoto T."/>
            <person name="Kushiro T."/>
            <person name="Fujii I."/>
            <person name="Ebizuka Y."/>
            <person name="Abe I."/>
        </authorList>
    </citation>
    <scope>FUNCTION</scope>
    <scope>CATALYTIC ACTIVITY</scope>
</reference>
<reference key="4">
    <citation type="journal article" date="2012" name="Org. Lett.">
        <title>Molecular genetic characterization of a cluster in A. terreus for biosynthesis of the meroterpenoid terretonin.</title>
        <authorList>
            <person name="Guo C.J."/>
            <person name="Knox B.P."/>
            <person name="Chiang Y.M."/>
            <person name="Lo H.C."/>
            <person name="Sanchez J.F."/>
            <person name="Lee K.H."/>
            <person name="Oakley B.R."/>
            <person name="Bruno K.S."/>
            <person name="Wang C.C."/>
        </authorList>
    </citation>
    <scope>FUNCTION</scope>
    <scope>DISRUPTION PHENOTYPE</scope>
</reference>
<reference key="5">
    <citation type="journal article" date="2015" name="J. Am. Chem. Soc.">
        <title>Uncovering the unusual D-ring construction in terretonin biosynthesis by collaboration of a multifunctional cytochrome P450 and a unique isomerase.</title>
        <authorList>
            <person name="Matsuda Y."/>
            <person name="Iwabuchi T."/>
            <person name="Wakimoto T."/>
            <person name="Awakawa T."/>
            <person name="Abe I."/>
        </authorList>
    </citation>
    <scope>FUNCTION</scope>
</reference>
<reference key="6">
    <citation type="journal article" date="2017" name="Nat. Chem. Biol.">
        <title>Molecular basis for the unusual ring reconstruction in fungal meroterpenoid biogenesis.</title>
        <authorList>
            <person name="Mori T."/>
            <person name="Iwabuchi T."/>
            <person name="Hoshino S."/>
            <person name="Wang H."/>
            <person name="Matsuda Y."/>
            <person name="Abe I."/>
        </authorList>
    </citation>
    <scope>FUNCTION</scope>
</reference>
<sequence length="2422" mass="264859">MGSLQDAHPHRVSVLFGPKCPKTDRSVLHIRRYLSSHRNTGWLEDAVQALPSVWHDVTKVWPAAEKIPGFCVGYLAAVAACWETDQTEFPKAVATMLRIAVCIGAVVDLDELEKQRATSMAVRWKTSADYKLLTALLSRYPGAYIACVTDESAATVTIWESQAAALVKELESNGLVVKSTQLRGRFHHSDHTSVVQEFLKLCQEDNRFHLPNGNPAVGLPRSNIDGEVPTLQSLLSVANESILISQANWNLTVSATISSLQLTDAKSIVSIGAGQCIPRKARGRILHTVEPPDSHHNTNTTQDSDVTTNASPLTAGYVNGTGPAATATTVPIAVTGMACRYPQADSMEELWKILEQGHCTVSPMPKNRFKLDELQREPKGPFWGNFLSRPDTFDHRFFKISAREAESMDPQQRLLLQVAYEAIESAGYCGLRASQLPQDVGCYVGVGTEDYSENVASRNATAFSATGTLQAFNSGRVSHYFGWTGPSVTIDTACSSAAVAIHLACQALQTNDCSMAVAGGVNVMTDPRWSQNLAAASFLSPTGASKAFDADANGYCRGEGAGLVVLRPLEAALRDGDPIHAVITGTSVNQGANCSPITVPDSNSQTTLYLKALSISGIKPDVVTYVEAHGTGTQVGDPIEFQSIRKTFAVPHRTERLYVGSIKDNIGHTETSSGVAGMLKTILMLQKRRIPKQANFTRLNPMITLQKEDQIFIPVESTDWKAEKRVAMVTNYGAAGSNAAIVLQEPTCTSRTPISGYREYLPSVIPVFVAARTEESIREYCKALQTAFLEAPQVNNVEVQDIAFNLARKQNRDMEYSVAFTTASGNDAELRERLEDIVSGRTRIEKKCQAAHPVVLCFGGQTGNTASISQNLVQSSELLRFHLYATAKAWLDSGLRVDRMIGHSFGQLTAVCVAGGLSLLDAMRLISSRAQLIRSEWKSDTGLMLSVRGEKETVQALLDAVSNAADIACVNGPESFVVAGDEATIHKMENIAVERGMKLRMQRLKNTHAFHSKLVDSILPGLTKIASTLNYRPLRIPVEPCSELADDWSLPTGDKIVQHSRKAVYFHNAIRRTISHMDSPCIWLEAGSASPIIRMVRRAVDASPSPRDHVYCPIDLSGPQAEENFAKVFSSLWSKGVQVQFWPFHGSQTGYRWINLPPYQFAKTSHWIDYDPNAFYSDPPKREAGRTDEPSLVKLLNNDGNVYLFGVNVNDPLFRMCTAGHAVVDQNLCPASLYFELVVRGAVAVLPLENDPTMYHIAGLDISAPLVLDMPGSVFLELTQRGSGPGQFTFVLFTRDGNQDSVAHATGKISISSEANDSGISSRFGSLRRLVNPSRWGFIATSPSSSGLKRSTVYQAFRRVVNYADYYRGVEEVYAVGHEATGRVLLPSSPTNKASCDPILIDNFIQVAGIHVNCLSETLDEEVFVCSSVGDVIIGELFVRRDPGVSVPWIVYSSSERESMKKSLCDIFVVDEATGSLALCILSATFTCVSIQSLKRTLTRLNNKALASTGVDVVVPAVAVAPAAPAASAAMPDSSRSEDGLRVVQAMLSELLGISAGEIPASAALGDVGVDSLMSTEVLSEINKRFKVVITNSELTAIADVSGLVQRIFPGGSVAHVETHSQPPDKIGITTGDRMPPPRVPPPTVIQEQSLPGFVDKARELFAASRTSNEYRQKTRFLGFCDSVFPQQMELVTVYVVAALKALNVDLQSLRFGQAVPSVEVLPQHGKVMNQLFAVLEYSGLVERRGTGMIRGHRAVNKSTATILHKKILSEHPQHASEHKLLHTTGSRLADCLIGAADPLSLLFQDAQARALMQDVYSNAPMFKSATMHLAQFLKDLLGQRCFQRRISILEIGAGTGGTTDYILKQLSSVAGLTFEYTFTDISSSLVTLARKRFKTYHFMHYATLDIEQDPAPELQGQYDIIISSNCIHATRSLATSCSNIQKLLRPQGILCLIELTRNLFWFDLVFGLLEGWWLFNDGRSHALAHERLWDQTLRQAGFNWVDWTDNDSEESKILRMIVASPSQPVLCSPGEAKSNAVAEETLVYSRKDGLELCADIYYPHGLDGEDRKRPVAILIHGGGHIMLSRKDVRPMQVKMLLDMGFLPVSIDYRLCPEVPLLEGPMVDACDALAWARHELPQLQLKRPDIRPDGGNVVAVGWSSGGHLAMTLAWTAPARSVRAPEAILSFYSPTDYTDPFWTKPNFPYQESVCMSDVPTSDPLLALHDTAITSYNPAPGKGVLGGWMSPSDPRSRIALHMNWTGQTLPVLFYGCKYKSLAAAAKGDEVLLPAPHMSEVEKACPLSQVRAGRYKTPTFLIHGTLDDLIPVQQAQRIHQQMLVCGVESVLRIVSDGLHLFDIIPHLKENKDASQAVLDGLAPHIPTDEYPNPPPKLPKMDTSYPKCLYLISGVPVKALEIMSCYVFHR</sequence>
<gene>
    <name evidence="14" type="primary">trt4</name>
    <name type="ORF">ATEG_10080</name>
</gene>
<dbReference type="EC" id="2.3.1.-" evidence="9 10"/>
<dbReference type="EMBL" id="CH476609">
    <property type="protein sequence ID" value="EAU29529.1"/>
    <property type="status" value="ALT_SEQ"/>
    <property type="molecule type" value="Genomic_DNA"/>
</dbReference>
<dbReference type="RefSeq" id="XP_001209382.1">
    <property type="nucleotide sequence ID" value="XM_001209382.1"/>
</dbReference>
<dbReference type="SMR" id="Q0C8A4"/>
<dbReference type="STRING" id="341663.Q0C8A4"/>
<dbReference type="ESTHER" id="asptn-trt4">
    <property type="family name" value="BD-FAE"/>
</dbReference>
<dbReference type="GeneID" id="4319423"/>
<dbReference type="eggNOG" id="KOG1202">
    <property type="taxonomic scope" value="Eukaryota"/>
</dbReference>
<dbReference type="HOGENOM" id="CLU_000022_6_3_1"/>
<dbReference type="OrthoDB" id="429813at2759"/>
<dbReference type="UniPathway" id="UPA00213"/>
<dbReference type="Proteomes" id="UP000007963">
    <property type="component" value="Unassembled WGS sequence"/>
</dbReference>
<dbReference type="GO" id="GO:0004315">
    <property type="term" value="F:3-oxoacyl-[acyl-carrier-protein] synthase activity"/>
    <property type="evidence" value="ECO:0007669"/>
    <property type="project" value="InterPro"/>
</dbReference>
<dbReference type="GO" id="GO:0004312">
    <property type="term" value="F:fatty acid synthase activity"/>
    <property type="evidence" value="ECO:0007669"/>
    <property type="project" value="TreeGrafter"/>
</dbReference>
<dbReference type="GO" id="GO:0008168">
    <property type="term" value="F:methyltransferase activity"/>
    <property type="evidence" value="ECO:0007669"/>
    <property type="project" value="UniProtKB-KW"/>
</dbReference>
<dbReference type="GO" id="GO:0031177">
    <property type="term" value="F:phosphopantetheine binding"/>
    <property type="evidence" value="ECO:0007669"/>
    <property type="project" value="InterPro"/>
</dbReference>
<dbReference type="GO" id="GO:0006633">
    <property type="term" value="P:fatty acid biosynthetic process"/>
    <property type="evidence" value="ECO:0007669"/>
    <property type="project" value="InterPro"/>
</dbReference>
<dbReference type="GO" id="GO:0032259">
    <property type="term" value="P:methylation"/>
    <property type="evidence" value="ECO:0007669"/>
    <property type="project" value="UniProtKB-KW"/>
</dbReference>
<dbReference type="GO" id="GO:0044550">
    <property type="term" value="P:secondary metabolite biosynthetic process"/>
    <property type="evidence" value="ECO:0007669"/>
    <property type="project" value="TreeGrafter"/>
</dbReference>
<dbReference type="GO" id="GO:0016114">
    <property type="term" value="P:terpenoid biosynthetic process"/>
    <property type="evidence" value="ECO:0007669"/>
    <property type="project" value="UniProtKB-UniPathway"/>
</dbReference>
<dbReference type="CDD" id="cd02440">
    <property type="entry name" value="AdoMet_MTases"/>
    <property type="match status" value="1"/>
</dbReference>
<dbReference type="CDD" id="cd00833">
    <property type="entry name" value="PKS"/>
    <property type="match status" value="1"/>
</dbReference>
<dbReference type="Gene3D" id="3.30.70.3290">
    <property type="match status" value="1"/>
</dbReference>
<dbReference type="Gene3D" id="3.40.47.10">
    <property type="match status" value="1"/>
</dbReference>
<dbReference type="Gene3D" id="1.10.1200.10">
    <property type="entry name" value="ACP-like"/>
    <property type="match status" value="1"/>
</dbReference>
<dbReference type="Gene3D" id="3.40.50.1820">
    <property type="entry name" value="alpha/beta hydrolase"/>
    <property type="match status" value="1"/>
</dbReference>
<dbReference type="Gene3D" id="3.40.366.10">
    <property type="entry name" value="Malonyl-Coenzyme A Acyl Carrier Protein, domain 2"/>
    <property type="match status" value="1"/>
</dbReference>
<dbReference type="Gene3D" id="3.10.129.110">
    <property type="entry name" value="Polyketide synthase dehydratase"/>
    <property type="match status" value="1"/>
</dbReference>
<dbReference type="Gene3D" id="3.40.50.150">
    <property type="entry name" value="Vaccinia Virus protein VP39"/>
    <property type="match status" value="1"/>
</dbReference>
<dbReference type="InterPro" id="IPR029058">
    <property type="entry name" value="AB_hydrolase_fold"/>
</dbReference>
<dbReference type="InterPro" id="IPR001227">
    <property type="entry name" value="Ac_transferase_dom_sf"/>
</dbReference>
<dbReference type="InterPro" id="IPR036736">
    <property type="entry name" value="ACP-like_sf"/>
</dbReference>
<dbReference type="InterPro" id="IPR014043">
    <property type="entry name" value="Acyl_transferase_dom"/>
</dbReference>
<dbReference type="InterPro" id="IPR016035">
    <property type="entry name" value="Acyl_Trfase/lysoPLipase"/>
</dbReference>
<dbReference type="InterPro" id="IPR049492">
    <property type="entry name" value="BD-FAE-like_dom"/>
</dbReference>
<dbReference type="InterPro" id="IPR018201">
    <property type="entry name" value="Ketoacyl_synth_AS"/>
</dbReference>
<dbReference type="InterPro" id="IPR014031">
    <property type="entry name" value="Ketoacyl_synth_C"/>
</dbReference>
<dbReference type="InterPro" id="IPR014030">
    <property type="entry name" value="Ketoacyl_synth_N"/>
</dbReference>
<dbReference type="InterPro" id="IPR016036">
    <property type="entry name" value="Malonyl_transacylase_ACP-bd"/>
</dbReference>
<dbReference type="InterPro" id="IPR013217">
    <property type="entry name" value="Methyltransf_12"/>
</dbReference>
<dbReference type="InterPro" id="IPR020841">
    <property type="entry name" value="PKS_Beta-ketoAc_synthase_dom"/>
</dbReference>
<dbReference type="InterPro" id="IPR042104">
    <property type="entry name" value="PKS_dehydratase_sf"/>
</dbReference>
<dbReference type="InterPro" id="IPR049900">
    <property type="entry name" value="PKS_mFAS_DH"/>
</dbReference>
<dbReference type="InterPro" id="IPR050091">
    <property type="entry name" value="PKS_NRPS_Biosynth_Enz"/>
</dbReference>
<dbReference type="InterPro" id="IPR020806">
    <property type="entry name" value="PKS_PP-bd"/>
</dbReference>
<dbReference type="InterPro" id="IPR009081">
    <property type="entry name" value="PP-bd_ACP"/>
</dbReference>
<dbReference type="InterPro" id="IPR006162">
    <property type="entry name" value="Ppantetheine_attach_site"/>
</dbReference>
<dbReference type="InterPro" id="IPR029063">
    <property type="entry name" value="SAM-dependent_MTases_sf"/>
</dbReference>
<dbReference type="InterPro" id="IPR016039">
    <property type="entry name" value="Thiolase-like"/>
</dbReference>
<dbReference type="PANTHER" id="PTHR43775">
    <property type="entry name" value="FATTY ACID SYNTHASE"/>
    <property type="match status" value="1"/>
</dbReference>
<dbReference type="PANTHER" id="PTHR43775:SF21">
    <property type="entry name" value="NON-REDUCING POLYKETIDE SYNTHASE AUSA-RELATED"/>
    <property type="match status" value="1"/>
</dbReference>
<dbReference type="Pfam" id="PF00698">
    <property type="entry name" value="Acyl_transf_1"/>
    <property type="match status" value="1"/>
</dbReference>
<dbReference type="Pfam" id="PF20434">
    <property type="entry name" value="BD-FAE"/>
    <property type="match status" value="1"/>
</dbReference>
<dbReference type="Pfam" id="PF18558">
    <property type="entry name" value="HTH_51"/>
    <property type="match status" value="1"/>
</dbReference>
<dbReference type="Pfam" id="PF00109">
    <property type="entry name" value="ketoacyl-synt"/>
    <property type="match status" value="1"/>
</dbReference>
<dbReference type="Pfam" id="PF02801">
    <property type="entry name" value="Ketoacyl-synt_C"/>
    <property type="match status" value="1"/>
</dbReference>
<dbReference type="Pfam" id="PF08242">
    <property type="entry name" value="Methyltransf_12"/>
    <property type="match status" value="1"/>
</dbReference>
<dbReference type="Pfam" id="PF00550">
    <property type="entry name" value="PP-binding"/>
    <property type="match status" value="1"/>
</dbReference>
<dbReference type="SMART" id="SM00827">
    <property type="entry name" value="PKS_AT"/>
    <property type="match status" value="1"/>
</dbReference>
<dbReference type="SMART" id="SM00825">
    <property type="entry name" value="PKS_KS"/>
    <property type="match status" value="1"/>
</dbReference>
<dbReference type="SMART" id="SM00823">
    <property type="entry name" value="PKS_PP"/>
    <property type="match status" value="1"/>
</dbReference>
<dbReference type="SUPFAM" id="SSF47336">
    <property type="entry name" value="ACP-like"/>
    <property type="match status" value="1"/>
</dbReference>
<dbReference type="SUPFAM" id="SSF53474">
    <property type="entry name" value="alpha/beta-Hydrolases"/>
    <property type="match status" value="1"/>
</dbReference>
<dbReference type="SUPFAM" id="SSF52151">
    <property type="entry name" value="FabD/lysophospholipase-like"/>
    <property type="match status" value="1"/>
</dbReference>
<dbReference type="SUPFAM" id="SSF55048">
    <property type="entry name" value="Probable ACP-binding domain of malonyl-CoA ACP transacylase"/>
    <property type="match status" value="1"/>
</dbReference>
<dbReference type="SUPFAM" id="SSF53335">
    <property type="entry name" value="S-adenosyl-L-methionine-dependent methyltransferases"/>
    <property type="match status" value="1"/>
</dbReference>
<dbReference type="SUPFAM" id="SSF53901">
    <property type="entry name" value="Thiolase-like"/>
    <property type="match status" value="1"/>
</dbReference>
<dbReference type="PROSITE" id="PS50075">
    <property type="entry name" value="CARRIER"/>
    <property type="match status" value="1"/>
</dbReference>
<dbReference type="PROSITE" id="PS00606">
    <property type="entry name" value="KS3_1"/>
    <property type="match status" value="1"/>
</dbReference>
<dbReference type="PROSITE" id="PS52004">
    <property type="entry name" value="KS3_2"/>
    <property type="match status" value="1"/>
</dbReference>
<dbReference type="PROSITE" id="PS00012">
    <property type="entry name" value="PHOSPHOPANTETHEINE"/>
    <property type="match status" value="1"/>
</dbReference>
<dbReference type="PROSITE" id="PS52019">
    <property type="entry name" value="PKS_MFAS_DH"/>
    <property type="match status" value="1"/>
</dbReference>
<protein>
    <recommendedName>
        <fullName evidence="14">Non-reducing polyketide synthase trt4</fullName>
        <ecNumber evidence="9 10">2.3.1.-</ecNumber>
    </recommendedName>
    <alternativeName>
        <fullName evidence="14">Terretonin synthesis protein 4</fullName>
    </alternativeName>
</protein>
<keyword id="KW-0489">Methyltransferase</keyword>
<keyword id="KW-0511">Multifunctional enzyme</keyword>
<keyword id="KW-0596">Phosphopantetheine</keyword>
<keyword id="KW-0597">Phosphoprotein</keyword>
<keyword id="KW-1185">Reference proteome</keyword>
<keyword id="KW-0808">Transferase</keyword>
<accession>Q0C8A4</accession>
<name>TRT4_ASPTN</name>